<dbReference type="EMBL" id="CP001341">
    <property type="protein sequence ID" value="ACL40653.1"/>
    <property type="molecule type" value="Genomic_DNA"/>
</dbReference>
<dbReference type="RefSeq" id="WP_003803825.1">
    <property type="nucleotide sequence ID" value="NC_011886.1"/>
</dbReference>
<dbReference type="SMR" id="B8HD07"/>
<dbReference type="STRING" id="452863.Achl_2688"/>
<dbReference type="GeneID" id="97421003"/>
<dbReference type="KEGG" id="ach:Achl_2688"/>
<dbReference type="eggNOG" id="COG0051">
    <property type="taxonomic scope" value="Bacteria"/>
</dbReference>
<dbReference type="HOGENOM" id="CLU_122625_1_3_11"/>
<dbReference type="OrthoDB" id="9804464at2"/>
<dbReference type="Proteomes" id="UP000002505">
    <property type="component" value="Chromosome"/>
</dbReference>
<dbReference type="GO" id="GO:1990904">
    <property type="term" value="C:ribonucleoprotein complex"/>
    <property type="evidence" value="ECO:0007669"/>
    <property type="project" value="UniProtKB-KW"/>
</dbReference>
<dbReference type="GO" id="GO:0005840">
    <property type="term" value="C:ribosome"/>
    <property type="evidence" value="ECO:0007669"/>
    <property type="project" value="UniProtKB-KW"/>
</dbReference>
<dbReference type="GO" id="GO:0003735">
    <property type="term" value="F:structural constituent of ribosome"/>
    <property type="evidence" value="ECO:0007669"/>
    <property type="project" value="InterPro"/>
</dbReference>
<dbReference type="GO" id="GO:0000049">
    <property type="term" value="F:tRNA binding"/>
    <property type="evidence" value="ECO:0007669"/>
    <property type="project" value="UniProtKB-UniRule"/>
</dbReference>
<dbReference type="GO" id="GO:0006412">
    <property type="term" value="P:translation"/>
    <property type="evidence" value="ECO:0007669"/>
    <property type="project" value="UniProtKB-UniRule"/>
</dbReference>
<dbReference type="FunFam" id="3.30.70.600:FF:000001">
    <property type="entry name" value="30S ribosomal protein S10"/>
    <property type="match status" value="1"/>
</dbReference>
<dbReference type="Gene3D" id="3.30.70.600">
    <property type="entry name" value="Ribosomal protein S10 domain"/>
    <property type="match status" value="1"/>
</dbReference>
<dbReference type="HAMAP" id="MF_00508">
    <property type="entry name" value="Ribosomal_uS10"/>
    <property type="match status" value="1"/>
</dbReference>
<dbReference type="InterPro" id="IPR001848">
    <property type="entry name" value="Ribosomal_uS10"/>
</dbReference>
<dbReference type="InterPro" id="IPR018268">
    <property type="entry name" value="Ribosomal_uS10_CS"/>
</dbReference>
<dbReference type="InterPro" id="IPR027486">
    <property type="entry name" value="Ribosomal_uS10_dom"/>
</dbReference>
<dbReference type="InterPro" id="IPR036838">
    <property type="entry name" value="Ribosomal_uS10_dom_sf"/>
</dbReference>
<dbReference type="NCBIfam" id="NF001861">
    <property type="entry name" value="PRK00596.1"/>
    <property type="match status" value="1"/>
</dbReference>
<dbReference type="NCBIfam" id="TIGR01049">
    <property type="entry name" value="rpsJ_bact"/>
    <property type="match status" value="1"/>
</dbReference>
<dbReference type="PANTHER" id="PTHR11700">
    <property type="entry name" value="30S RIBOSOMAL PROTEIN S10 FAMILY MEMBER"/>
    <property type="match status" value="1"/>
</dbReference>
<dbReference type="Pfam" id="PF00338">
    <property type="entry name" value="Ribosomal_S10"/>
    <property type="match status" value="1"/>
</dbReference>
<dbReference type="PRINTS" id="PR00971">
    <property type="entry name" value="RIBOSOMALS10"/>
</dbReference>
<dbReference type="SMART" id="SM01403">
    <property type="entry name" value="Ribosomal_S10"/>
    <property type="match status" value="1"/>
</dbReference>
<dbReference type="SUPFAM" id="SSF54999">
    <property type="entry name" value="Ribosomal protein S10"/>
    <property type="match status" value="1"/>
</dbReference>
<dbReference type="PROSITE" id="PS00361">
    <property type="entry name" value="RIBOSOMAL_S10"/>
    <property type="match status" value="1"/>
</dbReference>
<accession>B8HD07</accession>
<evidence type="ECO:0000255" key="1">
    <source>
        <dbReference type="HAMAP-Rule" id="MF_00508"/>
    </source>
</evidence>
<evidence type="ECO:0000305" key="2"/>
<name>RS10_PSECP</name>
<protein>
    <recommendedName>
        <fullName evidence="1">Small ribosomal subunit protein uS10</fullName>
    </recommendedName>
    <alternativeName>
        <fullName evidence="2">30S ribosomal protein S10</fullName>
    </alternativeName>
</protein>
<organism>
    <name type="scientific">Pseudarthrobacter chlorophenolicus (strain ATCC 700700 / DSM 12829 / CIP 107037 / JCM 12360 / KCTC 9906 / NCIMB 13794 / A6)</name>
    <name type="common">Arthrobacter chlorophenolicus</name>
    <dbReference type="NCBI Taxonomy" id="452863"/>
    <lineage>
        <taxon>Bacteria</taxon>
        <taxon>Bacillati</taxon>
        <taxon>Actinomycetota</taxon>
        <taxon>Actinomycetes</taxon>
        <taxon>Micrococcales</taxon>
        <taxon>Micrococcaceae</taxon>
        <taxon>Pseudarthrobacter</taxon>
    </lineage>
</organism>
<sequence>MAGQKIRIRLKSYDHEVIDVSARKIVETVTRAGATVVGPVPLPTEKNVYCVIRSPHKYKDSREHFEMRTHKRLIDIIDPTPKAVDSLMRLDLPADVNIEIKL</sequence>
<feature type="chain" id="PRO_1000196282" description="Small ribosomal subunit protein uS10">
    <location>
        <begin position="1"/>
        <end position="102"/>
    </location>
</feature>
<keyword id="KW-0687">Ribonucleoprotein</keyword>
<keyword id="KW-0689">Ribosomal protein</keyword>
<proteinExistence type="inferred from homology"/>
<comment type="function">
    <text evidence="1">Involved in the binding of tRNA to the ribosomes.</text>
</comment>
<comment type="subunit">
    <text evidence="1">Part of the 30S ribosomal subunit.</text>
</comment>
<comment type="similarity">
    <text evidence="1">Belongs to the universal ribosomal protein uS10 family.</text>
</comment>
<gene>
    <name evidence="1" type="primary">rpsJ</name>
    <name type="ordered locus">Achl_2688</name>
</gene>
<reference key="1">
    <citation type="submission" date="2009-01" db="EMBL/GenBank/DDBJ databases">
        <title>Complete sequence of chromosome of Arthrobacter chlorophenolicus A6.</title>
        <authorList>
            <consortium name="US DOE Joint Genome Institute"/>
            <person name="Lucas S."/>
            <person name="Copeland A."/>
            <person name="Lapidus A."/>
            <person name="Glavina del Rio T."/>
            <person name="Tice H."/>
            <person name="Bruce D."/>
            <person name="Goodwin L."/>
            <person name="Pitluck S."/>
            <person name="Goltsman E."/>
            <person name="Clum A."/>
            <person name="Larimer F."/>
            <person name="Land M."/>
            <person name="Hauser L."/>
            <person name="Kyrpides N."/>
            <person name="Mikhailova N."/>
            <person name="Jansson J."/>
            <person name="Richardson P."/>
        </authorList>
    </citation>
    <scope>NUCLEOTIDE SEQUENCE [LARGE SCALE GENOMIC DNA]</scope>
    <source>
        <strain>ATCC 700700 / DSM 12829 / CIP 107037 / JCM 12360 / KCTC 9906 / NCIMB 13794 / A6</strain>
    </source>
</reference>